<accession>P16405</accession>
<organism>
    <name type="scientific">Plasmodium falciparum (isolate NF7 / Ghana)</name>
    <dbReference type="NCBI Taxonomy" id="5842"/>
    <lineage>
        <taxon>Eukaryota</taxon>
        <taxon>Sar</taxon>
        <taxon>Alveolata</taxon>
        <taxon>Apicomplexa</taxon>
        <taxon>Aconoidasida</taxon>
        <taxon>Haemosporida</taxon>
        <taxon>Plasmodiidae</taxon>
        <taxon>Plasmodium</taxon>
        <taxon>Plasmodium (Laverania)</taxon>
    </lineage>
</organism>
<keyword id="KW-0325">Glycoprotein</keyword>
<keyword id="KW-0677">Repeat</keyword>
<reference key="1">
    <citation type="journal article" date="1989" name="Mol. Biochem. Parasitol.">
        <title>cDNA sequence predicting an octapeptide-repeat antigen of Plasmodium falciparum.</title>
        <authorList>
            <person name="Favaloro J.M."/>
            <person name="Marshall V.M."/>
            <person name="Crewther P.E."/>
            <person name="Coppel R.L."/>
            <person name="Kemp D.J."/>
            <person name="Anders R.F."/>
        </authorList>
    </citation>
    <scope>NUCLEOTIDE SEQUENCE [MRNA]</scope>
</reference>
<feature type="chain" id="PRO_0000193178" description="Octapeptide-repeat antigen">
    <location>
        <begin position="1" status="less than"/>
        <end position="701" status="greater than"/>
    </location>
</feature>
<feature type="repeat" description="1">
    <location>
        <begin position="653"/>
        <end position="660"/>
    </location>
</feature>
<feature type="repeat" description="2">
    <location>
        <begin position="661"/>
        <end position="668"/>
    </location>
</feature>
<feature type="repeat" description="3">
    <location>
        <begin position="669"/>
        <end position="676"/>
    </location>
</feature>
<feature type="repeat" description="4">
    <location>
        <begin position="677"/>
        <end position="684"/>
    </location>
</feature>
<feature type="repeat" description="5">
    <location>
        <begin position="685"/>
        <end position="692"/>
    </location>
</feature>
<feature type="repeat" description="6">
    <location>
        <begin position="693"/>
        <end position="700"/>
    </location>
</feature>
<feature type="region of interest" description="Disordered" evidence="2">
    <location>
        <begin position="120"/>
        <end position="140"/>
    </location>
</feature>
<feature type="region of interest" description="Disordered" evidence="2">
    <location>
        <begin position="641"/>
        <end position="701"/>
    </location>
</feature>
<feature type="region of interest" description="6 X 8 AA approximate tandem repeats">
    <location>
        <begin position="653"/>
        <end position="700"/>
    </location>
</feature>
<feature type="compositionally biased region" description="Low complexity" evidence="2">
    <location>
        <begin position="642"/>
        <end position="655"/>
    </location>
</feature>
<feature type="compositionally biased region" description="Basic and acidic residues" evidence="2">
    <location>
        <begin position="656"/>
        <end position="701"/>
    </location>
</feature>
<feature type="glycosylation site" description="N-linked (GlcNAc...) asparagine" evidence="1">
    <location>
        <position position="40"/>
    </location>
</feature>
<feature type="glycosylation site" description="N-linked (GlcNAc...) asparagine" evidence="1">
    <location>
        <position position="41"/>
    </location>
</feature>
<feature type="glycosylation site" description="N-linked (GlcNAc...) asparagine" evidence="1">
    <location>
        <position position="76"/>
    </location>
</feature>
<feature type="glycosylation site" description="N-linked (GlcNAc...) asparagine" evidence="1">
    <location>
        <position position="111"/>
    </location>
</feature>
<feature type="glycosylation site" description="N-linked (GlcNAc...) asparagine" evidence="1">
    <location>
        <position position="127"/>
    </location>
</feature>
<feature type="glycosylation site" description="N-linked (GlcNAc...) asparagine" evidence="1">
    <location>
        <position position="139"/>
    </location>
</feature>
<feature type="glycosylation site" description="N-linked (GlcNAc...) asparagine" evidence="1">
    <location>
        <position position="181"/>
    </location>
</feature>
<feature type="glycosylation site" description="N-linked (GlcNAc...) asparagine" evidence="1">
    <location>
        <position position="189"/>
    </location>
</feature>
<feature type="glycosylation site" description="N-linked (GlcNAc...) asparagine" evidence="1">
    <location>
        <position position="311"/>
    </location>
</feature>
<feature type="glycosylation site" description="N-linked (GlcNAc...) asparagine" evidence="1">
    <location>
        <position position="334"/>
    </location>
</feature>
<feature type="glycosylation site" description="N-linked (GlcNAc...) asparagine" evidence="1">
    <location>
        <position position="344"/>
    </location>
</feature>
<feature type="glycosylation site" description="N-linked (GlcNAc...) asparagine" evidence="1">
    <location>
        <position position="477"/>
    </location>
</feature>
<feature type="glycosylation site" description="N-linked (GlcNAc...) asparagine" evidence="1">
    <location>
        <position position="557"/>
    </location>
</feature>
<feature type="non-terminal residue">
    <location>
        <position position="1"/>
    </location>
</feature>
<feature type="non-terminal residue">
    <location>
        <position position="701"/>
    </location>
</feature>
<comment type="subcellular location">
    <subcellularLocation>
        <location evidence="3">Parasitophorous vacuole</location>
    </subcellularLocation>
</comment>
<comment type="developmental stage">
    <text>In trophozoites, schizonts, and merozoites.</text>
</comment>
<comment type="similarity">
    <text evidence="3">Belongs to the ATP-dependent AMP-binding enzyme family.</text>
</comment>
<evidence type="ECO:0000255" key="1"/>
<evidence type="ECO:0000256" key="2">
    <source>
        <dbReference type="SAM" id="MobiDB-lite"/>
    </source>
</evidence>
<evidence type="ECO:0000305" key="3"/>
<name>ORA_PLAFN</name>
<sequence>KKVLSFSHSLNTYEGTGVPEKIYNEEKNNGKFRLLGLYGNNSTNWLITDCACMISGVTTLVMHSKFSIDIIIDILNNTKLEWLCLDLDLVEGLLCRKNELPYLKKLIILDNLTKRSEMKIENEEKSNGSRKSSNKQKYNESDKREDISLCALECDKEKIEKINSLKEKAKTLGLSIIVFDNMTENKIANVTVQNEDPNFIASIVYTSGTSGKPKGVMLSNRNLYNGVIPPCDCNIIKKYPLTTHLSYLPVSHIYERVIFFIALFLGVKINIWSRDIKFLNTDICNSKAEIILGVPKVFNRMYATIMTKINNLSRCKKWIAKQAINLRKGKNNGNFSKVVEGITNISRKIKDKINPNMDVILNGGGKLSPEVAEGLSVLLNVKYYQGYGLTESTGPIFLQDVDDCNTESMGVAVSPSTRYKVRTWEIYKATDTIPKGELLIKSDSMFSGYFLEKESTEHAFTNDGYFKTGDIVQINDNGSLTFLDRSKGLVKLSQGEYIETEMINNLYSQIPFVNFCVAYGDDSMDGPLGIISVDKHKLFTFLKNDNMLKTTGVDEKNFSEKLIDETLNDPIYVDYVKGKMMEIYKKTNLNRYNVINDIYLTSKPWDTTNYLTPTLKIRRFNVFKDFSFFIDEVKKKYEEKLSGSSTGSMNNGKSGSKSDIKGGSKDDIKSGSKDDIKSGSKADIKSGSKDDIKSGSKDHIK</sequence>
<protein>
    <recommendedName>
        <fullName>Octapeptide-repeat antigen</fullName>
        <shortName>ORA</shortName>
    </recommendedName>
</protein>
<dbReference type="EMBL" id="J04007">
    <property type="protein sequence ID" value="AAA29713.1"/>
    <property type="molecule type" value="mRNA"/>
</dbReference>
<dbReference type="SMR" id="P16405"/>
<dbReference type="GO" id="GO:0005783">
    <property type="term" value="C:endoplasmic reticulum"/>
    <property type="evidence" value="ECO:0007669"/>
    <property type="project" value="TreeGrafter"/>
</dbReference>
<dbReference type="GO" id="GO:0016020">
    <property type="term" value="C:membrane"/>
    <property type="evidence" value="ECO:0007669"/>
    <property type="project" value="TreeGrafter"/>
</dbReference>
<dbReference type="GO" id="GO:0020003">
    <property type="term" value="C:symbiont-containing vacuole"/>
    <property type="evidence" value="ECO:0007669"/>
    <property type="project" value="UniProtKB-SubCell"/>
</dbReference>
<dbReference type="GO" id="GO:0004467">
    <property type="term" value="F:long-chain fatty acid-CoA ligase activity"/>
    <property type="evidence" value="ECO:0007669"/>
    <property type="project" value="TreeGrafter"/>
</dbReference>
<dbReference type="Gene3D" id="3.40.50.980">
    <property type="match status" value="1"/>
</dbReference>
<dbReference type="Gene3D" id="3.40.50.12780">
    <property type="entry name" value="N-terminal domain of ligase-like"/>
    <property type="match status" value="2"/>
</dbReference>
<dbReference type="InterPro" id="IPR020845">
    <property type="entry name" value="AMP-binding_CS"/>
</dbReference>
<dbReference type="InterPro" id="IPR000873">
    <property type="entry name" value="AMP-dep_synth/lig_dom"/>
</dbReference>
<dbReference type="InterPro" id="IPR042099">
    <property type="entry name" value="ANL_N_sf"/>
</dbReference>
<dbReference type="PANTHER" id="PTHR43272:SF3">
    <property type="entry name" value="LONG CHAIN ACYL-COA SYNTHETASE 4"/>
    <property type="match status" value="1"/>
</dbReference>
<dbReference type="PANTHER" id="PTHR43272">
    <property type="entry name" value="LONG-CHAIN-FATTY-ACID--COA LIGASE"/>
    <property type="match status" value="1"/>
</dbReference>
<dbReference type="Pfam" id="PF00501">
    <property type="entry name" value="AMP-binding"/>
    <property type="match status" value="1"/>
</dbReference>
<dbReference type="SUPFAM" id="SSF56801">
    <property type="entry name" value="Acetyl-CoA synthetase-like"/>
    <property type="match status" value="1"/>
</dbReference>
<dbReference type="PROSITE" id="PS00455">
    <property type="entry name" value="AMP_BINDING"/>
    <property type="match status" value="1"/>
</dbReference>
<proteinExistence type="evidence at transcript level"/>